<feature type="chain" id="PRO_1000096834" description="Phosphopantetheine adenylyltransferase">
    <location>
        <begin position="1"/>
        <end position="159"/>
    </location>
</feature>
<feature type="binding site" evidence="1">
    <location>
        <begin position="10"/>
        <end position="11"/>
    </location>
    <ligand>
        <name>ATP</name>
        <dbReference type="ChEBI" id="CHEBI:30616"/>
    </ligand>
</feature>
<feature type="binding site" evidence="1">
    <location>
        <position position="10"/>
    </location>
    <ligand>
        <name>substrate</name>
    </ligand>
</feature>
<feature type="binding site" evidence="1">
    <location>
        <position position="18"/>
    </location>
    <ligand>
        <name>ATP</name>
        <dbReference type="ChEBI" id="CHEBI:30616"/>
    </ligand>
</feature>
<feature type="binding site" evidence="1">
    <location>
        <position position="42"/>
    </location>
    <ligand>
        <name>substrate</name>
    </ligand>
</feature>
<feature type="binding site" evidence="1">
    <location>
        <position position="74"/>
    </location>
    <ligand>
        <name>substrate</name>
    </ligand>
</feature>
<feature type="binding site" evidence="1">
    <location>
        <position position="88"/>
    </location>
    <ligand>
        <name>substrate</name>
    </ligand>
</feature>
<feature type="binding site" evidence="1">
    <location>
        <begin position="89"/>
        <end position="91"/>
    </location>
    <ligand>
        <name>ATP</name>
        <dbReference type="ChEBI" id="CHEBI:30616"/>
    </ligand>
</feature>
<feature type="binding site" evidence="1">
    <location>
        <position position="99"/>
    </location>
    <ligand>
        <name>ATP</name>
        <dbReference type="ChEBI" id="CHEBI:30616"/>
    </ligand>
</feature>
<feature type="binding site" evidence="1">
    <location>
        <begin position="124"/>
        <end position="130"/>
    </location>
    <ligand>
        <name>ATP</name>
        <dbReference type="ChEBI" id="CHEBI:30616"/>
    </ligand>
</feature>
<feature type="site" description="Transition state stabilizer" evidence="1">
    <location>
        <position position="18"/>
    </location>
</feature>
<keyword id="KW-0067">ATP-binding</keyword>
<keyword id="KW-0173">Coenzyme A biosynthesis</keyword>
<keyword id="KW-0963">Cytoplasm</keyword>
<keyword id="KW-0460">Magnesium</keyword>
<keyword id="KW-0547">Nucleotide-binding</keyword>
<keyword id="KW-0548">Nucleotidyltransferase</keyword>
<keyword id="KW-0808">Transferase</keyword>
<protein>
    <recommendedName>
        <fullName evidence="1">Phosphopantetheine adenylyltransferase</fullName>
        <ecNumber evidence="1">2.7.7.3</ecNumber>
    </recommendedName>
    <alternativeName>
        <fullName evidence="1">Dephospho-CoA pyrophosphorylase</fullName>
    </alternativeName>
    <alternativeName>
        <fullName evidence="1">Pantetheine-phosphate adenylyltransferase</fullName>
        <shortName evidence="1">PPAT</shortName>
    </alternativeName>
</protein>
<evidence type="ECO:0000255" key="1">
    <source>
        <dbReference type="HAMAP-Rule" id="MF_00151"/>
    </source>
</evidence>
<gene>
    <name evidence="1" type="primary">coaD</name>
    <name type="ordered locus">SEN3547</name>
</gene>
<comment type="function">
    <text evidence="1">Reversibly transfers an adenylyl group from ATP to 4'-phosphopantetheine, yielding dephospho-CoA (dPCoA) and pyrophosphate.</text>
</comment>
<comment type="catalytic activity">
    <reaction evidence="1">
        <text>(R)-4'-phosphopantetheine + ATP + H(+) = 3'-dephospho-CoA + diphosphate</text>
        <dbReference type="Rhea" id="RHEA:19801"/>
        <dbReference type="ChEBI" id="CHEBI:15378"/>
        <dbReference type="ChEBI" id="CHEBI:30616"/>
        <dbReference type="ChEBI" id="CHEBI:33019"/>
        <dbReference type="ChEBI" id="CHEBI:57328"/>
        <dbReference type="ChEBI" id="CHEBI:61723"/>
        <dbReference type="EC" id="2.7.7.3"/>
    </reaction>
</comment>
<comment type="cofactor">
    <cofactor evidence="1">
        <name>Mg(2+)</name>
        <dbReference type="ChEBI" id="CHEBI:18420"/>
    </cofactor>
</comment>
<comment type="pathway">
    <text evidence="1">Cofactor biosynthesis; coenzyme A biosynthesis; CoA from (R)-pantothenate: step 4/5.</text>
</comment>
<comment type="subunit">
    <text evidence="1">Homohexamer.</text>
</comment>
<comment type="subcellular location">
    <subcellularLocation>
        <location evidence="1">Cytoplasm</location>
    </subcellularLocation>
</comment>
<comment type="similarity">
    <text evidence="1">Belongs to the bacterial CoaD family.</text>
</comment>
<accession>B5R5F8</accession>
<proteinExistence type="inferred from homology"/>
<name>COAD_SALEP</name>
<reference key="1">
    <citation type="journal article" date="2008" name="Genome Res.">
        <title>Comparative genome analysis of Salmonella enteritidis PT4 and Salmonella gallinarum 287/91 provides insights into evolutionary and host adaptation pathways.</title>
        <authorList>
            <person name="Thomson N.R."/>
            <person name="Clayton D.J."/>
            <person name="Windhorst D."/>
            <person name="Vernikos G."/>
            <person name="Davidson S."/>
            <person name="Churcher C."/>
            <person name="Quail M.A."/>
            <person name="Stevens M."/>
            <person name="Jones M.A."/>
            <person name="Watson M."/>
            <person name="Barron A."/>
            <person name="Layton A."/>
            <person name="Pickard D."/>
            <person name="Kingsley R.A."/>
            <person name="Bignell A."/>
            <person name="Clark L."/>
            <person name="Harris B."/>
            <person name="Ormond D."/>
            <person name="Abdellah Z."/>
            <person name="Brooks K."/>
            <person name="Cherevach I."/>
            <person name="Chillingworth T."/>
            <person name="Woodward J."/>
            <person name="Norberczak H."/>
            <person name="Lord A."/>
            <person name="Arrowsmith C."/>
            <person name="Jagels K."/>
            <person name="Moule S."/>
            <person name="Mungall K."/>
            <person name="Saunders M."/>
            <person name="Whitehead S."/>
            <person name="Chabalgoity J.A."/>
            <person name="Maskell D."/>
            <person name="Humphreys T."/>
            <person name="Roberts M."/>
            <person name="Barrow P.A."/>
            <person name="Dougan G."/>
            <person name="Parkhill J."/>
        </authorList>
    </citation>
    <scope>NUCLEOTIDE SEQUENCE [LARGE SCALE GENOMIC DNA]</scope>
    <source>
        <strain>P125109</strain>
    </source>
</reference>
<organism>
    <name type="scientific">Salmonella enteritidis PT4 (strain P125109)</name>
    <dbReference type="NCBI Taxonomy" id="550537"/>
    <lineage>
        <taxon>Bacteria</taxon>
        <taxon>Pseudomonadati</taxon>
        <taxon>Pseudomonadota</taxon>
        <taxon>Gammaproteobacteria</taxon>
        <taxon>Enterobacterales</taxon>
        <taxon>Enterobacteriaceae</taxon>
        <taxon>Salmonella</taxon>
    </lineage>
</organism>
<sequence length="159" mass="17926">MQKRAIYPGTFDPITNGHLDIVTRATQMFDHVILAIAASPGKKPMFTLDERVALAQKATAHLGNVEVVGFSDLMANFARDRQANILIRGLRAVADFEYEMQLAHMNRHLMPQLESVFLMPSKEWSFISSSLVKEVARHQGDVTHFLPDNVHQALMDKLK</sequence>
<dbReference type="EC" id="2.7.7.3" evidence="1"/>
<dbReference type="EMBL" id="AM933172">
    <property type="protein sequence ID" value="CAR35126.1"/>
    <property type="molecule type" value="Genomic_DNA"/>
</dbReference>
<dbReference type="RefSeq" id="WP_001171884.1">
    <property type="nucleotide sequence ID" value="NC_011294.1"/>
</dbReference>
<dbReference type="SMR" id="B5R5F8"/>
<dbReference type="KEGG" id="set:SEN3547"/>
<dbReference type="HOGENOM" id="CLU_100149_0_1_6"/>
<dbReference type="UniPathway" id="UPA00241">
    <property type="reaction ID" value="UER00355"/>
</dbReference>
<dbReference type="Proteomes" id="UP000000613">
    <property type="component" value="Chromosome"/>
</dbReference>
<dbReference type="GO" id="GO:0005737">
    <property type="term" value="C:cytoplasm"/>
    <property type="evidence" value="ECO:0007669"/>
    <property type="project" value="UniProtKB-SubCell"/>
</dbReference>
<dbReference type="GO" id="GO:0005524">
    <property type="term" value="F:ATP binding"/>
    <property type="evidence" value="ECO:0007669"/>
    <property type="project" value="UniProtKB-KW"/>
</dbReference>
<dbReference type="GO" id="GO:0004595">
    <property type="term" value="F:pantetheine-phosphate adenylyltransferase activity"/>
    <property type="evidence" value="ECO:0007669"/>
    <property type="project" value="UniProtKB-UniRule"/>
</dbReference>
<dbReference type="GO" id="GO:0015937">
    <property type="term" value="P:coenzyme A biosynthetic process"/>
    <property type="evidence" value="ECO:0007669"/>
    <property type="project" value="UniProtKB-UniRule"/>
</dbReference>
<dbReference type="CDD" id="cd02163">
    <property type="entry name" value="PPAT"/>
    <property type="match status" value="1"/>
</dbReference>
<dbReference type="FunFam" id="3.40.50.620:FF:000012">
    <property type="entry name" value="Phosphopantetheine adenylyltransferase"/>
    <property type="match status" value="1"/>
</dbReference>
<dbReference type="Gene3D" id="3.40.50.620">
    <property type="entry name" value="HUPs"/>
    <property type="match status" value="1"/>
</dbReference>
<dbReference type="HAMAP" id="MF_00151">
    <property type="entry name" value="PPAT_bact"/>
    <property type="match status" value="1"/>
</dbReference>
<dbReference type="InterPro" id="IPR004821">
    <property type="entry name" value="Cyt_trans-like"/>
</dbReference>
<dbReference type="InterPro" id="IPR001980">
    <property type="entry name" value="PPAT"/>
</dbReference>
<dbReference type="InterPro" id="IPR014729">
    <property type="entry name" value="Rossmann-like_a/b/a_fold"/>
</dbReference>
<dbReference type="NCBIfam" id="TIGR01510">
    <property type="entry name" value="coaD_prev_kdtB"/>
    <property type="match status" value="1"/>
</dbReference>
<dbReference type="NCBIfam" id="TIGR00125">
    <property type="entry name" value="cyt_tran_rel"/>
    <property type="match status" value="1"/>
</dbReference>
<dbReference type="PANTHER" id="PTHR21342">
    <property type="entry name" value="PHOSPHOPANTETHEINE ADENYLYLTRANSFERASE"/>
    <property type="match status" value="1"/>
</dbReference>
<dbReference type="PANTHER" id="PTHR21342:SF1">
    <property type="entry name" value="PHOSPHOPANTETHEINE ADENYLYLTRANSFERASE"/>
    <property type="match status" value="1"/>
</dbReference>
<dbReference type="Pfam" id="PF01467">
    <property type="entry name" value="CTP_transf_like"/>
    <property type="match status" value="1"/>
</dbReference>
<dbReference type="PRINTS" id="PR01020">
    <property type="entry name" value="LPSBIOSNTHSS"/>
</dbReference>
<dbReference type="SUPFAM" id="SSF52374">
    <property type="entry name" value="Nucleotidylyl transferase"/>
    <property type="match status" value="1"/>
</dbReference>